<dbReference type="EMBL" id="X56034">
    <property type="protein sequence ID" value="CAA39509.1"/>
    <property type="molecule type" value="Genomic_DNA"/>
</dbReference>
<dbReference type="PIR" id="S11035">
    <property type="entry name" value="S11035"/>
</dbReference>
<dbReference type="SMR" id="P25420"/>
<dbReference type="GO" id="GO:0005739">
    <property type="term" value="C:mitochondrion"/>
    <property type="evidence" value="ECO:0007669"/>
    <property type="project" value="UniProtKB-SubCell"/>
</dbReference>
<dbReference type="GO" id="GO:0005524">
    <property type="term" value="F:ATP binding"/>
    <property type="evidence" value="ECO:0007669"/>
    <property type="project" value="UniProtKB-KW"/>
</dbReference>
<dbReference type="GO" id="GO:0140662">
    <property type="term" value="F:ATP-dependent protein folding chaperone"/>
    <property type="evidence" value="ECO:0007669"/>
    <property type="project" value="InterPro"/>
</dbReference>
<dbReference type="GO" id="GO:0042026">
    <property type="term" value="P:protein refolding"/>
    <property type="evidence" value="ECO:0007669"/>
    <property type="project" value="InterPro"/>
</dbReference>
<dbReference type="CDD" id="cd03344">
    <property type="entry name" value="GroEL"/>
    <property type="match status" value="1"/>
</dbReference>
<dbReference type="FunFam" id="3.50.7.10:FF:000001">
    <property type="entry name" value="60 kDa chaperonin"/>
    <property type="match status" value="1"/>
</dbReference>
<dbReference type="FunFam" id="1.10.560.10:FF:000031">
    <property type="entry name" value="60 kDa heat shock protein, mitochondrial"/>
    <property type="match status" value="1"/>
</dbReference>
<dbReference type="Gene3D" id="3.50.7.10">
    <property type="entry name" value="GroEL"/>
    <property type="match status" value="1"/>
</dbReference>
<dbReference type="Gene3D" id="1.10.560.10">
    <property type="entry name" value="GroEL-like equatorial domain"/>
    <property type="match status" value="1"/>
</dbReference>
<dbReference type="Gene3D" id="3.30.260.10">
    <property type="entry name" value="TCP-1-like chaperonin intermediate domain"/>
    <property type="match status" value="1"/>
</dbReference>
<dbReference type="InterPro" id="IPR018370">
    <property type="entry name" value="Chaperonin_Cpn60_CS"/>
</dbReference>
<dbReference type="InterPro" id="IPR001844">
    <property type="entry name" value="Cpn60/GroEL"/>
</dbReference>
<dbReference type="InterPro" id="IPR002423">
    <property type="entry name" value="Cpn60/GroEL/TCP-1"/>
</dbReference>
<dbReference type="InterPro" id="IPR027409">
    <property type="entry name" value="GroEL-like_apical_dom_sf"/>
</dbReference>
<dbReference type="InterPro" id="IPR027413">
    <property type="entry name" value="GROEL-like_equatorial_sf"/>
</dbReference>
<dbReference type="InterPro" id="IPR027410">
    <property type="entry name" value="TCP-1-like_intermed_sf"/>
</dbReference>
<dbReference type="NCBIfam" id="TIGR02348">
    <property type="entry name" value="GroEL"/>
    <property type="match status" value="1"/>
</dbReference>
<dbReference type="NCBIfam" id="NF000592">
    <property type="entry name" value="PRK00013.1"/>
    <property type="match status" value="1"/>
</dbReference>
<dbReference type="NCBIfam" id="NF009487">
    <property type="entry name" value="PRK12849.1"/>
    <property type="match status" value="1"/>
</dbReference>
<dbReference type="NCBIfam" id="NF009488">
    <property type="entry name" value="PRK12850.1"/>
    <property type="match status" value="1"/>
</dbReference>
<dbReference type="NCBIfam" id="NF009489">
    <property type="entry name" value="PRK12851.1"/>
    <property type="match status" value="1"/>
</dbReference>
<dbReference type="PANTHER" id="PTHR45633">
    <property type="entry name" value="60 KDA HEAT SHOCK PROTEIN, MITOCHONDRIAL"/>
    <property type="match status" value="1"/>
</dbReference>
<dbReference type="Pfam" id="PF00118">
    <property type="entry name" value="Cpn60_TCP1"/>
    <property type="match status" value="1"/>
</dbReference>
<dbReference type="PRINTS" id="PR00298">
    <property type="entry name" value="CHAPERONIN60"/>
</dbReference>
<dbReference type="SUPFAM" id="SSF52029">
    <property type="entry name" value="GroEL apical domain-like"/>
    <property type="match status" value="1"/>
</dbReference>
<dbReference type="SUPFAM" id="SSF48592">
    <property type="entry name" value="GroEL equatorial domain-like"/>
    <property type="match status" value="1"/>
</dbReference>
<dbReference type="SUPFAM" id="SSF54849">
    <property type="entry name" value="GroEL-intermediate domain like"/>
    <property type="match status" value="1"/>
</dbReference>
<dbReference type="PROSITE" id="PS00296">
    <property type="entry name" value="CHAPERONINS_CPN60"/>
    <property type="match status" value="1"/>
</dbReference>
<proteinExistence type="evidence at protein level"/>
<organism>
    <name type="scientific">Heliothis virescens</name>
    <name type="common">Tobacco budworm moth</name>
    <dbReference type="NCBI Taxonomy" id="7102"/>
    <lineage>
        <taxon>Eukaryota</taxon>
        <taxon>Metazoa</taxon>
        <taxon>Ecdysozoa</taxon>
        <taxon>Arthropoda</taxon>
        <taxon>Hexapoda</taxon>
        <taxon>Insecta</taxon>
        <taxon>Pterygota</taxon>
        <taxon>Neoptera</taxon>
        <taxon>Endopterygota</taxon>
        <taxon>Lepidoptera</taxon>
        <taxon>Glossata</taxon>
        <taxon>Ditrysia</taxon>
        <taxon>Noctuoidea</taxon>
        <taxon>Noctuidae</taxon>
        <taxon>Heliothinae</taxon>
        <taxon>Heliothis</taxon>
    </lineage>
</organism>
<keyword id="KW-0067">ATP-binding</keyword>
<keyword id="KW-0143">Chaperone</keyword>
<keyword id="KW-0903">Direct protein sequencing</keyword>
<keyword id="KW-0496">Mitochondrion</keyword>
<keyword id="KW-0547">Nucleotide-binding</keyword>
<keyword id="KW-0809">Transit peptide</keyword>
<protein>
    <recommendedName>
        <fullName>63 kDa chaperonin, mitochondrial</fullName>
    </recommendedName>
    <alternativeName>
        <fullName>p63</fullName>
    </alternativeName>
</protein>
<comment type="function">
    <text evidence="1">Implicated in mitochondrial protein import and macromolecular assembly. May facilitate the correct folding of imported proteins. May also prevent misfolding and promote the refolding and proper assembly of unfolded polypeptides generated under stress conditions in the mitochondrial matrix (By similarity).</text>
</comment>
<comment type="subunit">
    <text>Forms a single seven-member ring complex, in tight association with the p60 protein.</text>
</comment>
<comment type="subcellular location">
    <subcellularLocation>
        <location>Mitochondrion</location>
    </subcellularLocation>
</comment>
<comment type="tissue specificity">
    <text>Testis.</text>
</comment>
<comment type="developmental stage">
    <text>From the latter half of the larval final-instar, through the first two days of pupal development.</text>
</comment>
<comment type="miscellaneous">
    <text>Shows ATPase activity.</text>
</comment>
<comment type="similarity">
    <text evidence="3">Belongs to the chaperonin (HSP60) family.</text>
</comment>
<feature type="transit peptide" description="Mitochondrion" evidence="2">
    <location>
        <begin position="1"/>
        <end position="29"/>
    </location>
</feature>
<feature type="chain" id="PRO_0000005034" description="63 kDa chaperonin, mitochondrial">
    <location>
        <begin position="30"/>
        <end position="569"/>
    </location>
</feature>
<name>CH63_HELVI</name>
<sequence>MFKMYRSPHITRNSFKYLKATNINSCRFYAKEVRFGPDVRSLMLQGVDILADADDVTMGPKGVNVILAKNLGPPKITKDGVTVAKGIDLKDKFQNIGARLVQNVANKTNEEAGDGTTTATVLARPIAKEGFENISRGANPIEIRKGVMLAVESVKRQLKEMSKPVNTSEEIEQVATISANGDESIGKLIAAAMNRVGKNGVITVKDGKTLEDELEIIEGMKFDRGYVSPYFINSNKGPKVEYNDALVLYSEKKIYYASQVVPALELANSQKKPLVIIAEDYDGEPLSVLVVNKLKIGLPVVAVKAPGFGEYRTNALLDMAAATGGVFEDDTNLVRLEDCQAESFGQVGEVIITKDSTLLLKGKGDPNEIKQRIDQIKEELETATSNYDRERLIDRLGRLQSGVAVLLIGGCSEVEVNEKKDRVNDALNATRAAVEEGIVPGGGAALLRCIPALDLLKPANKDQEIGVSIIKKALRTPCITIASNAGFDGAVVVSKVEDMGPEYGYDALNNEYVNMIEKGIIDPTKVVRRALTDASGVASLLTTAEAVICDMPKQKDPPPEYAPIGGGDY</sequence>
<reference key="1">
    <citation type="journal article" date="1990" name="J. Mol. Biol.">
        <title>Identification and characterization of a testis-specific isoform of a chaperonin in a moth, Heliothis virescens.</title>
        <authorList>
            <person name="Miller S.G."/>
            <person name="Leclerc R.F."/>
            <person name="Erdos G.W."/>
        </authorList>
    </citation>
    <scope>NUCLEOTIDE SEQUENCE [GENOMIC DNA]</scope>
    <scope>PROTEIN SEQUENCE OF 30-53</scope>
    <source>
        <tissue>Testis</tissue>
    </source>
</reference>
<accession>P25420</accession>
<evidence type="ECO:0000250" key="1"/>
<evidence type="ECO:0000269" key="2">
    <source>
    </source>
</evidence>
<evidence type="ECO:0000305" key="3"/>